<reference key="1">
    <citation type="journal article" date="2010" name="ISME J.">
        <title>The complete genome sequence of the algal symbiont Dinoroseobacter shibae: a hitchhiker's guide to life in the sea.</title>
        <authorList>
            <person name="Wagner-Dobler I."/>
            <person name="Ballhausen B."/>
            <person name="Berger M."/>
            <person name="Brinkhoff T."/>
            <person name="Buchholz I."/>
            <person name="Bunk B."/>
            <person name="Cypionka H."/>
            <person name="Daniel R."/>
            <person name="Drepper T."/>
            <person name="Gerdts G."/>
            <person name="Hahnke S."/>
            <person name="Han C."/>
            <person name="Jahn D."/>
            <person name="Kalhoefer D."/>
            <person name="Kiss H."/>
            <person name="Klenk H.P."/>
            <person name="Kyrpides N."/>
            <person name="Liebl W."/>
            <person name="Liesegang H."/>
            <person name="Meincke L."/>
            <person name="Pati A."/>
            <person name="Petersen J."/>
            <person name="Piekarski T."/>
            <person name="Pommerenke C."/>
            <person name="Pradella S."/>
            <person name="Pukall R."/>
            <person name="Rabus R."/>
            <person name="Stackebrandt E."/>
            <person name="Thole S."/>
            <person name="Thompson L."/>
            <person name="Tielen P."/>
            <person name="Tomasch J."/>
            <person name="von Jan M."/>
            <person name="Wanphrut N."/>
            <person name="Wichels A."/>
            <person name="Zech H."/>
            <person name="Simon M."/>
        </authorList>
    </citation>
    <scope>NUCLEOTIDE SEQUENCE [LARGE SCALE GENOMIC DNA]</scope>
    <source>
        <strain>DSM 16493 / NCIMB 14021 / DFL 12</strain>
    </source>
</reference>
<keyword id="KW-0963">Cytoplasm</keyword>
<keyword id="KW-0441">Lipid A biosynthesis</keyword>
<keyword id="KW-0444">Lipid biosynthesis</keyword>
<keyword id="KW-0443">Lipid metabolism</keyword>
<keyword id="KW-0456">Lyase</keyword>
<keyword id="KW-1185">Reference proteome</keyword>
<evidence type="ECO:0000255" key="1">
    <source>
        <dbReference type="HAMAP-Rule" id="MF_00406"/>
    </source>
</evidence>
<accession>A8LK44</accession>
<comment type="function">
    <text evidence="1">Involved in unsaturated fatty acids biosynthesis. Catalyzes the dehydration of short chain beta-hydroxyacyl-ACPs and long chain saturated and unsaturated beta-hydroxyacyl-ACPs.</text>
</comment>
<comment type="catalytic activity">
    <reaction evidence="1">
        <text>a (3R)-hydroxyacyl-[ACP] = a (2E)-enoyl-[ACP] + H2O</text>
        <dbReference type="Rhea" id="RHEA:13097"/>
        <dbReference type="Rhea" id="RHEA-COMP:9925"/>
        <dbReference type="Rhea" id="RHEA-COMP:9945"/>
        <dbReference type="ChEBI" id="CHEBI:15377"/>
        <dbReference type="ChEBI" id="CHEBI:78784"/>
        <dbReference type="ChEBI" id="CHEBI:78827"/>
        <dbReference type="EC" id="4.2.1.59"/>
    </reaction>
</comment>
<comment type="subcellular location">
    <subcellularLocation>
        <location evidence="1">Cytoplasm</location>
    </subcellularLocation>
</comment>
<comment type="similarity">
    <text evidence="1">Belongs to the thioester dehydratase family. FabZ subfamily.</text>
</comment>
<feature type="chain" id="PRO_0000340775" description="3-hydroxyacyl-[acyl-carrier-protein] dehydratase FabZ">
    <location>
        <begin position="1"/>
        <end position="163"/>
    </location>
</feature>
<feature type="active site" evidence="1">
    <location>
        <position position="61"/>
    </location>
</feature>
<gene>
    <name evidence="1" type="primary">fabZ</name>
    <name type="ordered locus">Dshi_1501</name>
</gene>
<proteinExistence type="inferred from homology"/>
<protein>
    <recommendedName>
        <fullName evidence="1">3-hydroxyacyl-[acyl-carrier-protein] dehydratase FabZ</fullName>
        <ecNumber evidence="1">4.2.1.59</ecNumber>
    </recommendedName>
    <alternativeName>
        <fullName evidence="1">(3R)-hydroxymyristoyl-[acyl-carrier-protein] dehydratase</fullName>
        <shortName evidence="1">(3R)-hydroxymyristoyl-ACP dehydrase</shortName>
    </alternativeName>
    <alternativeName>
        <fullName evidence="1">Beta-hydroxyacyl-ACP dehydratase</fullName>
    </alternativeName>
</protein>
<organism>
    <name type="scientific">Dinoroseobacter shibae (strain DSM 16493 / NCIMB 14021 / DFL 12)</name>
    <dbReference type="NCBI Taxonomy" id="398580"/>
    <lineage>
        <taxon>Bacteria</taxon>
        <taxon>Pseudomonadati</taxon>
        <taxon>Pseudomonadota</taxon>
        <taxon>Alphaproteobacteria</taxon>
        <taxon>Rhodobacterales</taxon>
        <taxon>Roseobacteraceae</taxon>
        <taxon>Dinoroseobacter</taxon>
    </lineage>
</organism>
<name>FABZ_DINSH</name>
<dbReference type="EC" id="4.2.1.59" evidence="1"/>
<dbReference type="EMBL" id="CP000830">
    <property type="protein sequence ID" value="ABV93243.1"/>
    <property type="molecule type" value="Genomic_DNA"/>
</dbReference>
<dbReference type="RefSeq" id="WP_012178173.1">
    <property type="nucleotide sequence ID" value="NC_009952.1"/>
</dbReference>
<dbReference type="SMR" id="A8LK44"/>
<dbReference type="STRING" id="398580.Dshi_1501"/>
<dbReference type="KEGG" id="dsh:Dshi_1501"/>
<dbReference type="eggNOG" id="COG0764">
    <property type="taxonomic scope" value="Bacteria"/>
</dbReference>
<dbReference type="HOGENOM" id="CLU_078912_1_2_5"/>
<dbReference type="OrthoDB" id="9772788at2"/>
<dbReference type="Proteomes" id="UP000006833">
    <property type="component" value="Chromosome"/>
</dbReference>
<dbReference type="GO" id="GO:0005737">
    <property type="term" value="C:cytoplasm"/>
    <property type="evidence" value="ECO:0007669"/>
    <property type="project" value="UniProtKB-SubCell"/>
</dbReference>
<dbReference type="GO" id="GO:0016020">
    <property type="term" value="C:membrane"/>
    <property type="evidence" value="ECO:0007669"/>
    <property type="project" value="GOC"/>
</dbReference>
<dbReference type="GO" id="GO:0019171">
    <property type="term" value="F:(3R)-hydroxyacyl-[acyl-carrier-protein] dehydratase activity"/>
    <property type="evidence" value="ECO:0007669"/>
    <property type="project" value="UniProtKB-EC"/>
</dbReference>
<dbReference type="GO" id="GO:0006633">
    <property type="term" value="P:fatty acid biosynthetic process"/>
    <property type="evidence" value="ECO:0007669"/>
    <property type="project" value="UniProtKB-UniRule"/>
</dbReference>
<dbReference type="GO" id="GO:0009245">
    <property type="term" value="P:lipid A biosynthetic process"/>
    <property type="evidence" value="ECO:0007669"/>
    <property type="project" value="UniProtKB-UniRule"/>
</dbReference>
<dbReference type="CDD" id="cd01288">
    <property type="entry name" value="FabZ"/>
    <property type="match status" value="1"/>
</dbReference>
<dbReference type="FunFam" id="3.10.129.10:FF:000001">
    <property type="entry name" value="3-hydroxyacyl-[acyl-carrier-protein] dehydratase FabZ"/>
    <property type="match status" value="1"/>
</dbReference>
<dbReference type="Gene3D" id="3.10.129.10">
    <property type="entry name" value="Hotdog Thioesterase"/>
    <property type="match status" value="1"/>
</dbReference>
<dbReference type="HAMAP" id="MF_00406">
    <property type="entry name" value="FabZ"/>
    <property type="match status" value="1"/>
</dbReference>
<dbReference type="InterPro" id="IPR013114">
    <property type="entry name" value="FabA_FabZ"/>
</dbReference>
<dbReference type="InterPro" id="IPR010084">
    <property type="entry name" value="FabZ"/>
</dbReference>
<dbReference type="InterPro" id="IPR029069">
    <property type="entry name" value="HotDog_dom_sf"/>
</dbReference>
<dbReference type="NCBIfam" id="TIGR01750">
    <property type="entry name" value="fabZ"/>
    <property type="match status" value="1"/>
</dbReference>
<dbReference type="NCBIfam" id="NF000582">
    <property type="entry name" value="PRK00006.1"/>
    <property type="match status" value="1"/>
</dbReference>
<dbReference type="PANTHER" id="PTHR30272">
    <property type="entry name" value="3-HYDROXYACYL-[ACYL-CARRIER-PROTEIN] DEHYDRATASE"/>
    <property type="match status" value="1"/>
</dbReference>
<dbReference type="PANTHER" id="PTHR30272:SF1">
    <property type="entry name" value="3-HYDROXYACYL-[ACYL-CARRIER-PROTEIN] DEHYDRATASE"/>
    <property type="match status" value="1"/>
</dbReference>
<dbReference type="Pfam" id="PF07977">
    <property type="entry name" value="FabA"/>
    <property type="match status" value="1"/>
</dbReference>
<dbReference type="SUPFAM" id="SSF54637">
    <property type="entry name" value="Thioesterase/thiol ester dehydrase-isomerase"/>
    <property type="match status" value="1"/>
</dbReference>
<sequence>MNAKDNETAEFETTADLAMIQRILPHRYPFLLVDKVIDMVRFKSALGIKNVTFNEPHFQGHFPGEPIMPGVMIVEALAQTSAVLVGHSMASADEDVSVYFMSIDNCKFRRKVVPGDVMSLRVETMRGKPGGKVWKFLGEAIVEDTVAAQAEFTAMISFPQAAA</sequence>